<protein>
    <recommendedName>
        <fullName>Sodium/hydrogen exchanger 4</fullName>
    </recommendedName>
    <alternativeName>
        <fullName>Na(+)/H(+) exchanger 4</fullName>
        <shortName>NHE-4</shortName>
    </alternativeName>
    <alternativeName>
        <fullName>Solute carrier family 9 member 4</fullName>
    </alternativeName>
</protein>
<accession>Q6AI14</accession>
<accession>Q69YK0</accession>
<evidence type="ECO:0000250" key="1"/>
<evidence type="ECO:0000250" key="2">
    <source>
        <dbReference type="UniProtKB" id="P19634"/>
    </source>
</evidence>
<evidence type="ECO:0000250" key="3">
    <source>
        <dbReference type="UniProtKB" id="P26434"/>
    </source>
</evidence>
<evidence type="ECO:0000250" key="4">
    <source>
        <dbReference type="UniProtKB" id="Q8BUE1"/>
    </source>
</evidence>
<evidence type="ECO:0000255" key="5"/>
<evidence type="ECO:0000256" key="6">
    <source>
        <dbReference type="SAM" id="MobiDB-lite"/>
    </source>
</evidence>
<evidence type="ECO:0000305" key="7"/>
<proteinExistence type="evidence at protein level"/>
<sequence>MALQMFVTYSPWNCLLLLVALECSEASSDLNESANSTAQYASNAWFAAASSEPEEGISVFELDYDYVQIPYEVTLWILLASLAKIGFHLYHRLPGLMPESCLLILVGALVGGIIFGTDHKSPPVMDSSIYFLYLLPPIVLEGGYFMPTRPFFENIGSILWWAVLGALINALGIGLSLYLICQVKAFGLGDVNLLQNLLFGSLISAVDPVAVLAVFEEARVNEQLYMMIFGEALLNDGITVVLYNMLIAFTKMHKFEDIETVDILAGCARFIVVGLGGVLFGIVFGFISAFITRFTQNISAIEPLIVFMFSYLSYLAAETLYLSGILAITACAVTMKKYVEENVSQTSYTTIKYFMKMLSSVSETLIFIFMGVSTVGKNHEWNWAFICFTLAFCQIWRAISVFALFYISNQFRTFPFSIKDQCIIFYSGVRGAGSFSLAFLLPLSLFPRKKMFVTATLVVIYFTVFIQGITVGPLVRYLDVKKTNKKESINEELHIRLMDHLKAGIEDVCGHWSHYQVRDKFKKFDHRYLRKILIRKNLPKSSIVSLYKKLEMKQAIEMVETGILSSTAFSIPHQAQRIQGIKRLSPEDVESIRDILTSNMYQVRQRTLSYNKYNLKPQTSEKQAKEILIRRQNTLRESMRKGHSLPWGKPAGTKNIRYLSYPYGNPQSAGRDTRAAGFSDDDSSDPGSPSITFSACSRIGSLQKQEAQEIIPMKSLHRGRKAFSFGYQRNTSQEEYLGGVRRVALRPKPLFHAVDEEGESGGESEGKASLVEVRSRWTADHGHGRDHHRSHSPLLQKK</sequence>
<gene>
    <name type="primary">SLC9A4</name>
    <name type="synonym">NHE4</name>
</gene>
<organism>
    <name type="scientific">Homo sapiens</name>
    <name type="common">Human</name>
    <dbReference type="NCBI Taxonomy" id="9606"/>
    <lineage>
        <taxon>Eukaryota</taxon>
        <taxon>Metazoa</taxon>
        <taxon>Chordata</taxon>
        <taxon>Craniata</taxon>
        <taxon>Vertebrata</taxon>
        <taxon>Euteleostomi</taxon>
        <taxon>Mammalia</taxon>
        <taxon>Eutheria</taxon>
        <taxon>Euarchontoglires</taxon>
        <taxon>Primates</taxon>
        <taxon>Haplorrhini</taxon>
        <taxon>Catarrhini</taxon>
        <taxon>Hominidae</taxon>
        <taxon>Homo</taxon>
    </lineage>
</organism>
<comment type="function">
    <text evidence="3 4">Electroneutral antiporter that exchanges sodium for protons or ammonium ions at the basolateral membrane of epithelia to regulate cell volume and intracellular pH upon hypertonic conditions (By similarity). As part of transcellular ammonia transport in renal tubules, mediates basolateral ammonium extrusion in the medullary thick ascending limb, regulating the corticopapillary ammonium gradient and overall renal acid excretion (By similarity). Mediates sodium:proton exchange in gastric parietal cells secondary to cAMP-dependent acid secretion and hyperosmolarity. Possibly coupled to chloride:bicarbonate antiporter, enables loading of parietal cells with sodium and chloride ions to maintain cell volume and normal gastric acid secretion (By similarity). Functions as a sodium sensor in neurons of organum vasculosum of the lamina terminalis where it regulates water intake in response to increased sodium concentration in body fluids (By similarity).</text>
</comment>
<comment type="catalytic activity">
    <reaction evidence="4">
        <text>Na(+)(in) + H(+)(out) = Na(+)(out) + H(+)(in)</text>
        <dbReference type="Rhea" id="RHEA:29419"/>
        <dbReference type="ChEBI" id="CHEBI:15378"/>
        <dbReference type="ChEBI" id="CHEBI:29101"/>
    </reaction>
    <physiologicalReaction direction="right-to-left" evidence="4">
        <dbReference type="Rhea" id="RHEA:29421"/>
    </physiologicalReaction>
</comment>
<comment type="catalytic activity">
    <reaction evidence="4">
        <text>Na(+)(out) + NH4(+)(in) = Na(+)(in) + NH4(+)(out)</text>
        <dbReference type="Rhea" id="RHEA:76431"/>
        <dbReference type="ChEBI" id="CHEBI:28938"/>
        <dbReference type="ChEBI" id="CHEBI:29101"/>
    </reaction>
    <physiologicalReaction direction="left-to-right" evidence="4">
        <dbReference type="Rhea" id="RHEA:76432"/>
    </physiologicalReaction>
</comment>
<comment type="subunit">
    <text evidence="2 3">Homodimer; each protomer has one site for sodium and one site for proton binding (By similarity). Interacts with CHP1 and CHP2 (By similarity).</text>
</comment>
<comment type="subcellular location">
    <subcellularLocation>
        <location evidence="3">Basolateral cell membrane</location>
        <topology evidence="5">Multi-pass membrane protein</topology>
    </subcellularLocation>
    <subcellularLocation>
        <location evidence="4">Apical cell membrane</location>
        <topology evidence="5">Multi-pass membrane protein</topology>
    </subcellularLocation>
    <subcellularLocation>
        <location evidence="3">Zymogen granule membrane</location>
        <topology evidence="5">Multi-pass membrane protein</topology>
    </subcellularLocation>
    <text evidence="3">Enrichment at apical or basolateral membrane may be tissue-dependent.</text>
</comment>
<comment type="PTM">
    <text evidence="1">May be phosphorylated.</text>
</comment>
<comment type="similarity">
    <text evidence="7">Belongs to the monovalent cation:proton antiporter 1 (CPA1) transporter (TC 2.A.36) family.</text>
</comment>
<comment type="caution">
    <text evidence="7">The number, localization and denomination of hydrophobic domains in the Na(+)/H(+) exchangers vary among authors.</text>
</comment>
<feature type="chain" id="PRO_0000314665" description="Sodium/hydrogen exchanger 4">
    <location>
        <begin position="1"/>
        <end position="798"/>
    </location>
</feature>
<feature type="topological domain" description="Cytoplasmic" evidence="5">
    <location>
        <begin position="1"/>
        <end position="13"/>
    </location>
</feature>
<feature type="intramembrane region" description="Name=A/M1" evidence="5">
    <location>
        <begin position="14"/>
        <end position="28"/>
    </location>
</feature>
<feature type="topological domain" description="Cytoplasmic" evidence="5">
    <location>
        <begin position="29"/>
        <end position="69"/>
    </location>
</feature>
<feature type="intramembrane region" description="Name=B/M2" evidence="5">
    <location>
        <begin position="70"/>
        <end position="90"/>
    </location>
</feature>
<feature type="topological domain" description="Cytoplasmic" evidence="5">
    <location>
        <begin position="91"/>
        <end position="94"/>
    </location>
</feature>
<feature type="transmembrane region" description="Helical; Name=C/M3" evidence="5">
    <location>
        <begin position="95"/>
        <end position="115"/>
    </location>
</feature>
<feature type="topological domain" description="Extracellular" evidence="5">
    <location>
        <begin position="116"/>
        <end position="127"/>
    </location>
</feature>
<feature type="transmembrane region" description="Helical; Name=D/M4" evidence="5">
    <location>
        <begin position="128"/>
        <end position="148"/>
    </location>
</feature>
<feature type="topological domain" description="Cytoplasmic" evidence="5">
    <location>
        <begin position="149"/>
        <end position="154"/>
    </location>
</feature>
<feature type="transmembrane region" description="Helical; Name=E/M5" evidence="5">
    <location>
        <begin position="155"/>
        <end position="175"/>
    </location>
</feature>
<feature type="topological domain" description="Extracellular" evidence="5">
    <location>
        <begin position="176"/>
        <end position="196"/>
    </location>
</feature>
<feature type="transmembrane region" description="Helical; Name=F/M5A" evidence="5">
    <location>
        <begin position="197"/>
        <end position="217"/>
    </location>
</feature>
<feature type="topological domain" description="Cytoplasmic" evidence="5">
    <location>
        <begin position="218"/>
        <end position="226"/>
    </location>
</feature>
<feature type="transmembrane region" description="Helical; Name=G/M5B" evidence="5">
    <location>
        <begin position="227"/>
        <end position="247"/>
    </location>
</feature>
<feature type="topological domain" description="Extracellular" evidence="5">
    <location>
        <begin position="248"/>
        <end position="270"/>
    </location>
</feature>
<feature type="transmembrane region" description="Helical; Name=H/M6" evidence="5">
    <location>
        <begin position="271"/>
        <end position="291"/>
    </location>
</feature>
<feature type="topological domain" description="Cytoplasmic" evidence="5">
    <location>
        <begin position="292"/>
        <end position="304"/>
    </location>
</feature>
<feature type="transmembrane region" description="Helical; Name=I/M7" evidence="5">
    <location>
        <begin position="305"/>
        <end position="325"/>
    </location>
</feature>
<feature type="topological domain" description="Extracellular" evidence="5">
    <location>
        <begin position="326"/>
        <end position="356"/>
    </location>
</feature>
<feature type="transmembrane region" description="Helical; Name=J/M8" evidence="5">
    <location>
        <begin position="357"/>
        <end position="373"/>
    </location>
</feature>
<feature type="topological domain" description="Cytoplasmic" evidence="5">
    <location>
        <begin position="374"/>
        <end position="384"/>
    </location>
</feature>
<feature type="transmembrane region" description="Helical; Name=K/M9" evidence="5">
    <location>
        <begin position="385"/>
        <end position="405"/>
    </location>
</feature>
<feature type="topological domain" description="Extracellular" evidence="5">
    <location>
        <begin position="406"/>
        <end position="420"/>
    </location>
</feature>
<feature type="intramembrane region" description="Name=L" evidence="5">
    <location>
        <begin position="421"/>
        <end position="441"/>
    </location>
</feature>
<feature type="topological domain" description="Extracellular" evidence="5">
    <location>
        <begin position="442"/>
        <end position="450"/>
    </location>
</feature>
<feature type="transmembrane region" description="Helical; Name=M/M10" evidence="5">
    <location>
        <begin position="451"/>
        <end position="471"/>
    </location>
</feature>
<feature type="topological domain" description="Cytoplasmic" evidence="5">
    <location>
        <begin position="472"/>
        <end position="798"/>
    </location>
</feature>
<feature type="region of interest" description="Disordered" evidence="6">
    <location>
        <begin position="662"/>
        <end position="690"/>
    </location>
</feature>
<feature type="region of interest" description="Disordered" evidence="6">
    <location>
        <begin position="776"/>
        <end position="798"/>
    </location>
</feature>
<feature type="compositionally biased region" description="Basic residues" evidence="6">
    <location>
        <begin position="784"/>
        <end position="798"/>
    </location>
</feature>
<feature type="glycosylation site" description="N-linked (GlcNAc...) asparagine" evidence="5">
    <location>
        <position position="342"/>
    </location>
</feature>
<feature type="sequence variant" id="VAR_056209" description="In dbSNP:rs17027275.">
    <original>G</original>
    <variation>S</variation>
    <location>
        <position position="116"/>
    </location>
</feature>
<feature type="sequence variant" id="VAR_056210" description="In dbSNP:rs6742280.">
    <original>I</original>
    <variation>V</variation>
    <location>
        <position position="581"/>
    </location>
</feature>
<feature type="sequence conflict" description="In Ref. 1; CAH10500." evidence="7" ref="1">
    <original>V</original>
    <variation>A</variation>
    <location>
        <position position="429"/>
    </location>
</feature>
<feature type="sequence conflict" description="In Ref. 1; CAH10500/CAH10600." evidence="7" ref="1">
    <original>G</original>
    <variation>S</variation>
    <location>
        <position position="784"/>
    </location>
</feature>
<keyword id="KW-0050">Antiport</keyword>
<keyword id="KW-1003">Cell membrane</keyword>
<keyword id="KW-0968">Cytoplasmic vesicle</keyword>
<keyword id="KW-0325">Glycoprotein</keyword>
<keyword id="KW-0406">Ion transport</keyword>
<keyword id="KW-0472">Membrane</keyword>
<keyword id="KW-0597">Phosphoprotein</keyword>
<keyword id="KW-1267">Proteomics identification</keyword>
<keyword id="KW-1185">Reference proteome</keyword>
<keyword id="KW-0915">Sodium</keyword>
<keyword id="KW-0739">Sodium transport</keyword>
<keyword id="KW-0812">Transmembrane</keyword>
<keyword id="KW-1133">Transmembrane helix</keyword>
<keyword id="KW-0813">Transport</keyword>
<reference key="1">
    <citation type="journal article" date="2007" name="BMC Genomics">
        <title>The full-ORF clone resource of the German cDNA consortium.</title>
        <authorList>
            <person name="Bechtel S."/>
            <person name="Rosenfelder H."/>
            <person name="Duda A."/>
            <person name="Schmidt C.P."/>
            <person name="Ernst U."/>
            <person name="Wellenreuther R."/>
            <person name="Mehrle A."/>
            <person name="Schuster C."/>
            <person name="Bahr A."/>
            <person name="Bloecker H."/>
            <person name="Heubner D."/>
            <person name="Hoerlein A."/>
            <person name="Michel G."/>
            <person name="Wedler H."/>
            <person name="Koehrer K."/>
            <person name="Ottenwaelder B."/>
            <person name="Poustka A."/>
            <person name="Wiemann S."/>
            <person name="Schupp I."/>
        </authorList>
    </citation>
    <scope>NUCLEOTIDE SEQUENCE [LARGE SCALE MRNA]</scope>
    <source>
        <tissue>Fetal skin</tissue>
        <tissue>Stomach</tissue>
    </source>
</reference>
<reference key="2">
    <citation type="journal article" date="2005" name="Nature">
        <title>Generation and annotation of the DNA sequences of human chromosomes 2 and 4.</title>
        <authorList>
            <person name="Hillier L.W."/>
            <person name="Graves T.A."/>
            <person name="Fulton R.S."/>
            <person name="Fulton L.A."/>
            <person name="Pepin K.H."/>
            <person name="Minx P."/>
            <person name="Wagner-McPherson C."/>
            <person name="Layman D."/>
            <person name="Wylie K."/>
            <person name="Sekhon M."/>
            <person name="Becker M.C."/>
            <person name="Fewell G.A."/>
            <person name="Delehaunty K.D."/>
            <person name="Miner T.L."/>
            <person name="Nash W.E."/>
            <person name="Kremitzki C."/>
            <person name="Oddy L."/>
            <person name="Du H."/>
            <person name="Sun H."/>
            <person name="Bradshaw-Cordum H."/>
            <person name="Ali J."/>
            <person name="Carter J."/>
            <person name="Cordes M."/>
            <person name="Harris A."/>
            <person name="Isak A."/>
            <person name="van Brunt A."/>
            <person name="Nguyen C."/>
            <person name="Du F."/>
            <person name="Courtney L."/>
            <person name="Kalicki J."/>
            <person name="Ozersky P."/>
            <person name="Abbott S."/>
            <person name="Armstrong J."/>
            <person name="Belter E.A."/>
            <person name="Caruso L."/>
            <person name="Cedroni M."/>
            <person name="Cotton M."/>
            <person name="Davidson T."/>
            <person name="Desai A."/>
            <person name="Elliott G."/>
            <person name="Erb T."/>
            <person name="Fronick C."/>
            <person name="Gaige T."/>
            <person name="Haakenson W."/>
            <person name="Haglund K."/>
            <person name="Holmes A."/>
            <person name="Harkins R."/>
            <person name="Kim K."/>
            <person name="Kruchowski S.S."/>
            <person name="Strong C.M."/>
            <person name="Grewal N."/>
            <person name="Goyea E."/>
            <person name="Hou S."/>
            <person name="Levy A."/>
            <person name="Martinka S."/>
            <person name="Mead K."/>
            <person name="McLellan M.D."/>
            <person name="Meyer R."/>
            <person name="Randall-Maher J."/>
            <person name="Tomlinson C."/>
            <person name="Dauphin-Kohlberg S."/>
            <person name="Kozlowicz-Reilly A."/>
            <person name="Shah N."/>
            <person name="Swearengen-Shahid S."/>
            <person name="Snider J."/>
            <person name="Strong J.T."/>
            <person name="Thompson J."/>
            <person name="Yoakum M."/>
            <person name="Leonard S."/>
            <person name="Pearman C."/>
            <person name="Trani L."/>
            <person name="Radionenko M."/>
            <person name="Waligorski J.E."/>
            <person name="Wang C."/>
            <person name="Rock S.M."/>
            <person name="Tin-Wollam A.-M."/>
            <person name="Maupin R."/>
            <person name="Latreille P."/>
            <person name="Wendl M.C."/>
            <person name="Yang S.-P."/>
            <person name="Pohl C."/>
            <person name="Wallis J.W."/>
            <person name="Spieth J."/>
            <person name="Bieri T.A."/>
            <person name="Berkowicz N."/>
            <person name="Nelson J.O."/>
            <person name="Osborne J."/>
            <person name="Ding L."/>
            <person name="Meyer R."/>
            <person name="Sabo A."/>
            <person name="Shotland Y."/>
            <person name="Sinha P."/>
            <person name="Wohldmann P.E."/>
            <person name="Cook L.L."/>
            <person name="Hickenbotham M.T."/>
            <person name="Eldred J."/>
            <person name="Williams D."/>
            <person name="Jones T.A."/>
            <person name="She X."/>
            <person name="Ciccarelli F.D."/>
            <person name="Izaurralde E."/>
            <person name="Taylor J."/>
            <person name="Schmutz J."/>
            <person name="Myers R.M."/>
            <person name="Cox D.R."/>
            <person name="Huang X."/>
            <person name="McPherson J.D."/>
            <person name="Mardis E.R."/>
            <person name="Clifton S.W."/>
            <person name="Warren W.C."/>
            <person name="Chinwalla A.T."/>
            <person name="Eddy S.R."/>
            <person name="Marra M.A."/>
            <person name="Ovcharenko I."/>
            <person name="Furey T.S."/>
            <person name="Miller W."/>
            <person name="Eichler E.E."/>
            <person name="Bork P."/>
            <person name="Suyama M."/>
            <person name="Torrents D."/>
            <person name="Waterston R.H."/>
            <person name="Wilson R.K."/>
        </authorList>
    </citation>
    <scope>NUCLEOTIDE SEQUENCE [LARGE SCALE GENOMIC DNA]</scope>
</reference>
<dbReference type="EMBL" id="AL833048">
    <property type="protein sequence ID" value="CAH10600.1"/>
    <property type="molecule type" value="mRNA"/>
</dbReference>
<dbReference type="EMBL" id="CR627411">
    <property type="protein sequence ID" value="CAH10500.1"/>
    <property type="molecule type" value="mRNA"/>
</dbReference>
<dbReference type="EMBL" id="AC007278">
    <property type="status" value="NOT_ANNOTATED_CDS"/>
    <property type="molecule type" value="Genomic_DNA"/>
</dbReference>
<dbReference type="CCDS" id="CCDS33264.1"/>
<dbReference type="RefSeq" id="NP_001011552.2">
    <property type="nucleotide sequence ID" value="NM_001011552.4"/>
</dbReference>
<dbReference type="SMR" id="Q6AI14"/>
<dbReference type="BioGRID" id="132934">
    <property type="interactions" value="4"/>
</dbReference>
<dbReference type="FunCoup" id="Q6AI14">
    <property type="interactions" value="120"/>
</dbReference>
<dbReference type="IntAct" id="Q6AI14">
    <property type="interactions" value="2"/>
</dbReference>
<dbReference type="STRING" id="9606.ENSP00000295269"/>
<dbReference type="TCDB" id="2.A.36.1.18">
    <property type="family name" value="the monovalent cation:proton antiporter-1 (cpa1) family"/>
</dbReference>
<dbReference type="GlyCosmos" id="Q6AI14">
    <property type="glycosylation" value="1 site, No reported glycans"/>
</dbReference>
<dbReference type="GlyGen" id="Q6AI14">
    <property type="glycosylation" value="1 site"/>
</dbReference>
<dbReference type="iPTMnet" id="Q6AI14"/>
<dbReference type="PhosphoSitePlus" id="Q6AI14"/>
<dbReference type="BioMuta" id="SLC9A4"/>
<dbReference type="DMDM" id="296452906"/>
<dbReference type="MassIVE" id="Q6AI14"/>
<dbReference type="PaxDb" id="9606-ENSP00000295269"/>
<dbReference type="PeptideAtlas" id="Q6AI14"/>
<dbReference type="Antibodypedia" id="49172">
    <property type="antibodies" value="11 antibodies from 6 providers"/>
</dbReference>
<dbReference type="DNASU" id="389015"/>
<dbReference type="Ensembl" id="ENST00000295269.5">
    <property type="protein sequence ID" value="ENSP00000295269.4"/>
    <property type="gene ID" value="ENSG00000180251.5"/>
</dbReference>
<dbReference type="GeneID" id="389015"/>
<dbReference type="KEGG" id="hsa:389015"/>
<dbReference type="MANE-Select" id="ENST00000295269.5">
    <property type="protein sequence ID" value="ENSP00000295269.4"/>
    <property type="RefSeq nucleotide sequence ID" value="NM_001011552.4"/>
    <property type="RefSeq protein sequence ID" value="NP_001011552.2"/>
</dbReference>
<dbReference type="UCSC" id="uc002tbz.4">
    <property type="organism name" value="human"/>
</dbReference>
<dbReference type="AGR" id="HGNC:11077"/>
<dbReference type="CTD" id="389015"/>
<dbReference type="DisGeNET" id="389015"/>
<dbReference type="GeneCards" id="SLC9A4"/>
<dbReference type="HGNC" id="HGNC:11077">
    <property type="gene designation" value="SLC9A4"/>
</dbReference>
<dbReference type="HPA" id="ENSG00000180251">
    <property type="expression patterns" value="Tissue enriched (stomach)"/>
</dbReference>
<dbReference type="MIM" id="600531">
    <property type="type" value="gene"/>
</dbReference>
<dbReference type="neXtProt" id="NX_Q6AI14"/>
<dbReference type="OpenTargets" id="ENSG00000180251"/>
<dbReference type="PharmGKB" id="PA35933"/>
<dbReference type="VEuPathDB" id="HostDB:ENSG00000180251"/>
<dbReference type="eggNOG" id="KOG1966">
    <property type="taxonomic scope" value="Eukaryota"/>
</dbReference>
<dbReference type="GeneTree" id="ENSGT00940000160774"/>
<dbReference type="HOGENOM" id="CLU_005912_4_3_1"/>
<dbReference type="InParanoid" id="Q6AI14"/>
<dbReference type="OMA" id="TFSPWNC"/>
<dbReference type="OrthoDB" id="196264at2759"/>
<dbReference type="PAN-GO" id="Q6AI14">
    <property type="GO annotations" value="6 GO annotations based on evolutionary models"/>
</dbReference>
<dbReference type="PhylomeDB" id="Q6AI14"/>
<dbReference type="TreeFam" id="TF317212"/>
<dbReference type="PathwayCommons" id="Q6AI14"/>
<dbReference type="Reactome" id="R-HSA-425986">
    <property type="pathway name" value="Sodium/Proton exchangers"/>
</dbReference>
<dbReference type="SignaLink" id="Q6AI14"/>
<dbReference type="SIGNOR" id="Q6AI14"/>
<dbReference type="BioGRID-ORCS" id="389015">
    <property type="hits" value="8 hits in 1144 CRISPR screens"/>
</dbReference>
<dbReference type="GenomeRNAi" id="389015"/>
<dbReference type="Pharos" id="Q6AI14">
    <property type="development level" value="Tdark"/>
</dbReference>
<dbReference type="PRO" id="PR:Q6AI14"/>
<dbReference type="Proteomes" id="UP000005640">
    <property type="component" value="Chromosome 2"/>
</dbReference>
<dbReference type="RNAct" id="Q6AI14">
    <property type="molecule type" value="protein"/>
</dbReference>
<dbReference type="Bgee" id="ENSG00000180251">
    <property type="expression patterns" value="Expressed in male germ line stem cell (sensu Vertebrata) in testis and 49 other cell types or tissues"/>
</dbReference>
<dbReference type="GO" id="GO:0016324">
    <property type="term" value="C:apical plasma membrane"/>
    <property type="evidence" value="ECO:0007669"/>
    <property type="project" value="UniProtKB-SubCell"/>
</dbReference>
<dbReference type="GO" id="GO:0016323">
    <property type="term" value="C:basolateral plasma membrane"/>
    <property type="evidence" value="ECO:0000250"/>
    <property type="project" value="UniProtKB"/>
</dbReference>
<dbReference type="GO" id="GO:0005886">
    <property type="term" value="C:plasma membrane"/>
    <property type="evidence" value="ECO:0000318"/>
    <property type="project" value="GO_Central"/>
</dbReference>
<dbReference type="GO" id="GO:0042589">
    <property type="term" value="C:zymogen granule membrane"/>
    <property type="evidence" value="ECO:0007669"/>
    <property type="project" value="UniProtKB-SubCell"/>
</dbReference>
<dbReference type="GO" id="GO:0015386">
    <property type="term" value="F:potassium:proton antiporter activity"/>
    <property type="evidence" value="ECO:0000318"/>
    <property type="project" value="GO_Central"/>
</dbReference>
<dbReference type="GO" id="GO:0015385">
    <property type="term" value="F:sodium:proton antiporter activity"/>
    <property type="evidence" value="ECO:0000250"/>
    <property type="project" value="UniProtKB"/>
</dbReference>
<dbReference type="GO" id="GO:0001696">
    <property type="term" value="P:gastric acid secretion"/>
    <property type="evidence" value="ECO:0007669"/>
    <property type="project" value="Ensembl"/>
</dbReference>
<dbReference type="GO" id="GO:0002068">
    <property type="term" value="P:glandular epithelial cell development"/>
    <property type="evidence" value="ECO:0007669"/>
    <property type="project" value="Ensembl"/>
</dbReference>
<dbReference type="GO" id="GO:0006811">
    <property type="term" value="P:monoatomic ion transport"/>
    <property type="evidence" value="ECO:0000304"/>
    <property type="project" value="Reactome"/>
</dbReference>
<dbReference type="GO" id="GO:0071805">
    <property type="term" value="P:potassium ion transmembrane transport"/>
    <property type="evidence" value="ECO:0000318"/>
    <property type="project" value="GO_Central"/>
</dbReference>
<dbReference type="GO" id="GO:0051453">
    <property type="term" value="P:regulation of intracellular pH"/>
    <property type="evidence" value="ECO:0000318"/>
    <property type="project" value="GO_Central"/>
</dbReference>
<dbReference type="GO" id="GO:0098719">
    <property type="term" value="P:sodium ion import across plasma membrane"/>
    <property type="evidence" value="ECO:0000318"/>
    <property type="project" value="GO_Central"/>
</dbReference>
<dbReference type="GO" id="GO:0070634">
    <property type="term" value="P:transepithelial ammonium transport"/>
    <property type="evidence" value="ECO:0000250"/>
    <property type="project" value="UniProtKB"/>
</dbReference>
<dbReference type="Gene3D" id="6.10.140.1330">
    <property type="match status" value="1"/>
</dbReference>
<dbReference type="Gene3D" id="6.10.250.1040">
    <property type="match status" value="1"/>
</dbReference>
<dbReference type="Gene3D" id="6.10.250.2020">
    <property type="match status" value="1"/>
</dbReference>
<dbReference type="InterPro" id="IPR018422">
    <property type="entry name" value="Cation/H_exchanger_CPA1"/>
</dbReference>
<dbReference type="InterPro" id="IPR006153">
    <property type="entry name" value="Cation/H_exchanger_TM"/>
</dbReference>
<dbReference type="InterPro" id="IPR004709">
    <property type="entry name" value="NaH_exchanger"/>
</dbReference>
<dbReference type="InterPro" id="IPR001953">
    <property type="entry name" value="NHE-2/4"/>
</dbReference>
<dbReference type="InterPro" id="IPR032103">
    <property type="entry name" value="NHE_CaM-bd"/>
</dbReference>
<dbReference type="NCBIfam" id="TIGR00840">
    <property type="entry name" value="b_cpa1"/>
    <property type="match status" value="1"/>
</dbReference>
<dbReference type="PANTHER" id="PTHR10110">
    <property type="entry name" value="SODIUM/HYDROGEN EXCHANGER"/>
    <property type="match status" value="1"/>
</dbReference>
<dbReference type="PANTHER" id="PTHR10110:SF103">
    <property type="entry name" value="SODIUM_HYDROGEN EXCHANGER 4"/>
    <property type="match status" value="1"/>
</dbReference>
<dbReference type="Pfam" id="PF00999">
    <property type="entry name" value="Na_H_Exchanger"/>
    <property type="match status" value="1"/>
</dbReference>
<dbReference type="Pfam" id="PF16644">
    <property type="entry name" value="NEXCaM_BD"/>
    <property type="match status" value="1"/>
</dbReference>
<dbReference type="PRINTS" id="PR01084">
    <property type="entry name" value="NAHEXCHNGR"/>
</dbReference>
<dbReference type="PRINTS" id="PR01086">
    <property type="entry name" value="NAHEXCHNGR2"/>
</dbReference>
<name>SL9A4_HUMAN</name>